<dbReference type="EC" id="2.5.1.126" evidence="2"/>
<dbReference type="EC" id="2.5.1.79" evidence="2"/>
<dbReference type="EMBL" id="AE009441">
    <property type="protein sequence ID" value="AAL63322.1"/>
    <property type="molecule type" value="Genomic_DNA"/>
</dbReference>
<dbReference type="RefSeq" id="WP_011007794.1">
    <property type="nucleotide sequence ID" value="NC_003364.1"/>
</dbReference>
<dbReference type="SMR" id="Q8ZXM4"/>
<dbReference type="FunCoup" id="Q8ZXM4">
    <property type="interactions" value="192"/>
</dbReference>
<dbReference type="STRING" id="178306.PAE1203"/>
<dbReference type="EnsemblBacteria" id="AAL63322">
    <property type="protein sequence ID" value="AAL63322"/>
    <property type="gene ID" value="PAE1203"/>
</dbReference>
<dbReference type="GeneID" id="1465560"/>
<dbReference type="KEGG" id="pai:PAE1203"/>
<dbReference type="PATRIC" id="fig|178306.9.peg.890"/>
<dbReference type="eggNOG" id="arCOG00050">
    <property type="taxonomic scope" value="Archaea"/>
</dbReference>
<dbReference type="HOGENOM" id="CLU_048199_0_1_2"/>
<dbReference type="InParanoid" id="Q8ZXM4"/>
<dbReference type="BRENDA" id="2.5.1.126">
    <property type="organism ID" value="5239"/>
</dbReference>
<dbReference type="Proteomes" id="UP000002439">
    <property type="component" value="Chromosome"/>
</dbReference>
<dbReference type="GO" id="GO:0005737">
    <property type="term" value="C:cytoplasm"/>
    <property type="evidence" value="ECO:0007669"/>
    <property type="project" value="UniProtKB-SubCell"/>
</dbReference>
<dbReference type="GO" id="GO:0004766">
    <property type="term" value="F:spermidine synthase activity"/>
    <property type="evidence" value="ECO:0007669"/>
    <property type="project" value="UniProtKB-UniRule"/>
</dbReference>
<dbReference type="GO" id="GO:0010487">
    <property type="term" value="F:thermospermine synthase activity"/>
    <property type="evidence" value="ECO:0000314"/>
    <property type="project" value="UniProtKB"/>
</dbReference>
<dbReference type="GO" id="GO:0006596">
    <property type="term" value="P:polyamine biosynthetic process"/>
    <property type="evidence" value="ECO:0000314"/>
    <property type="project" value="UniProtKB"/>
</dbReference>
<dbReference type="GO" id="GO:0008295">
    <property type="term" value="P:spermidine biosynthetic process"/>
    <property type="evidence" value="ECO:0007669"/>
    <property type="project" value="UniProtKB-UniRule"/>
</dbReference>
<dbReference type="CDD" id="cd02440">
    <property type="entry name" value="AdoMet_MTases"/>
    <property type="match status" value="1"/>
</dbReference>
<dbReference type="FunFam" id="3.40.50.150:FF:000088">
    <property type="entry name" value="Polyamine aminopropyltransferase"/>
    <property type="match status" value="1"/>
</dbReference>
<dbReference type="Gene3D" id="2.30.140.10">
    <property type="entry name" value="Spermidine synthase, tetramerisation domain"/>
    <property type="match status" value="1"/>
</dbReference>
<dbReference type="Gene3D" id="3.40.50.150">
    <property type="entry name" value="Vaccinia Virus protein VP39"/>
    <property type="match status" value="1"/>
</dbReference>
<dbReference type="HAMAP" id="MF_00198">
    <property type="entry name" value="Spermidine_synth"/>
    <property type="match status" value="1"/>
</dbReference>
<dbReference type="InterPro" id="IPR030374">
    <property type="entry name" value="PABS"/>
</dbReference>
<dbReference type="InterPro" id="IPR030373">
    <property type="entry name" value="PABS_CS"/>
</dbReference>
<dbReference type="InterPro" id="IPR029063">
    <property type="entry name" value="SAM-dependent_MTases_sf"/>
</dbReference>
<dbReference type="InterPro" id="IPR001045">
    <property type="entry name" value="Spermi_synthase"/>
</dbReference>
<dbReference type="InterPro" id="IPR035246">
    <property type="entry name" value="Spermidine_synt_N"/>
</dbReference>
<dbReference type="InterPro" id="IPR037163">
    <property type="entry name" value="Spermidine_synt_N_sf"/>
</dbReference>
<dbReference type="NCBIfam" id="NF002010">
    <property type="entry name" value="PRK00811.1"/>
    <property type="match status" value="1"/>
</dbReference>
<dbReference type="PANTHER" id="PTHR43317">
    <property type="entry name" value="THERMOSPERMINE SYNTHASE ACAULIS5"/>
    <property type="match status" value="1"/>
</dbReference>
<dbReference type="PANTHER" id="PTHR43317:SF1">
    <property type="entry name" value="THERMOSPERMINE SYNTHASE ACAULIS5"/>
    <property type="match status" value="1"/>
</dbReference>
<dbReference type="Pfam" id="PF17284">
    <property type="entry name" value="Spermine_synt_N"/>
    <property type="match status" value="1"/>
</dbReference>
<dbReference type="Pfam" id="PF01564">
    <property type="entry name" value="Spermine_synth"/>
    <property type="match status" value="1"/>
</dbReference>
<dbReference type="SUPFAM" id="SSF53335">
    <property type="entry name" value="S-adenosyl-L-methionine-dependent methyltransferases"/>
    <property type="match status" value="1"/>
</dbReference>
<dbReference type="PROSITE" id="PS01330">
    <property type="entry name" value="PABS_1"/>
    <property type="match status" value="1"/>
</dbReference>
<dbReference type="PROSITE" id="PS51006">
    <property type="entry name" value="PABS_2"/>
    <property type="match status" value="1"/>
</dbReference>
<feature type="chain" id="PRO_0000156529" description="Polyamine aminopropyltransferase">
    <location>
        <begin position="1"/>
        <end position="291"/>
    </location>
</feature>
<feature type="domain" description="PABS" evidence="1">
    <location>
        <begin position="5"/>
        <end position="245"/>
    </location>
</feature>
<feature type="active site" description="Proton acceptor" evidence="1">
    <location>
        <position position="164"/>
    </location>
</feature>
<feature type="binding site" evidence="1">
    <location>
        <position position="36"/>
    </location>
    <ligand>
        <name>S-methyl-5'-thioadenosine</name>
        <dbReference type="ChEBI" id="CHEBI:17509"/>
    </ligand>
</feature>
<feature type="binding site" evidence="1">
    <location>
        <position position="67"/>
    </location>
    <ligand>
        <name>spermidine</name>
        <dbReference type="ChEBI" id="CHEBI:57834"/>
    </ligand>
</feature>
<feature type="binding site" evidence="1">
    <location>
        <position position="91"/>
    </location>
    <ligand>
        <name>spermidine</name>
        <dbReference type="ChEBI" id="CHEBI:57834"/>
    </ligand>
</feature>
<feature type="binding site" evidence="1">
    <location>
        <position position="111"/>
    </location>
    <ligand>
        <name>S-methyl-5'-thioadenosine</name>
        <dbReference type="ChEBI" id="CHEBI:17509"/>
    </ligand>
</feature>
<feature type="binding site" evidence="1">
    <location>
        <begin position="143"/>
        <end position="144"/>
    </location>
    <ligand>
        <name>S-methyl-5'-thioadenosine</name>
        <dbReference type="ChEBI" id="CHEBI:17509"/>
    </ligand>
</feature>
<protein>
    <recommendedName>
        <fullName evidence="1 3">Polyamine aminopropyltransferase</fullName>
    </recommendedName>
    <alternativeName>
        <fullName evidence="3">Diamine/triamine aminopropyltransferase</fullName>
    </alternativeName>
    <alternativeName>
        <fullName evidence="4">Norspermidine aminopropyltransferase</fullName>
        <ecNumber evidence="2">2.5.1.126</ecNumber>
    </alternativeName>
    <alternativeName>
        <fullName evidence="4">Norspermine synthase</fullName>
    </alternativeName>
    <alternativeName>
        <fullName evidence="4">Spermidine aminopropyltransferase</fullName>
        <ecNumber evidence="2">2.5.1.79</ecNumber>
    </alternativeName>
    <alternativeName>
        <fullName evidence="4">Thermospermine synthase</fullName>
    </alternativeName>
</protein>
<keyword id="KW-0963">Cytoplasm</keyword>
<keyword id="KW-0620">Polyamine biosynthesis</keyword>
<keyword id="KW-1185">Reference proteome</keyword>
<keyword id="KW-0808">Transferase</keyword>
<proteinExistence type="evidence at protein level"/>
<sequence length="291" mass="32806">MSKVPGPIVLMEPLSGKTSLIIKINAIHVSKRSKYQGILIVDTDDYGRTLVLDDYIQSSYYDEIYYHESLVHPAVTTHPRPSDVLILGGGEGATLREVLKHNTVKRAVMVDIDGDVVELSKKYLPQMHQGAFDDPRSEVRIEDGFVYVENALKRGEKFDVVIMDLTDPYSSDIAKQLYTPEFFGKVKRLLREDGIVVTQAGNSFYFPEAYDYVLQGVKGNFPIIAEYSVWIPSFGYAVNFVLGSLKHDPHSLSAEEVDKRLSERGVRAEFYSGKTHIALMNMPVIKKILRV</sequence>
<comment type="function">
    <text evidence="1 2">Involved in the biosynthesis of polyamines which are thought to support the growth of thermophilic microorganisms under high-temperature conditions. It seems that long-chain and branched-chain of polyamines effectively stabilize DNA and RNA, respectively. Catalyzes the irreversible transfer of a propylamine group from the amino donor S-adenosylmethioninamine (decarboxy-AdoMet) to norspermidine and 1,3-diaminopropane to yield norspermine, and to spermidine to yield thermospermine. It can also synthesize thermospermine from putrescine (1,4-diaminobutane) and caldopentamine from norspermine with a very low activity. The biosynthesis of caldohexamine and caldoheptamine from caldopentamine has been also observed.</text>
</comment>
<comment type="catalytic activity">
    <reaction evidence="2">
        <text>norspermidine + S-adenosyl 3-(methylsulfanyl)propylamine = norspermine + S-methyl-5'-thioadenosine + H(+)</text>
        <dbReference type="Rhea" id="RHEA:42864"/>
        <dbReference type="ChEBI" id="CHEBI:15378"/>
        <dbReference type="ChEBI" id="CHEBI:17509"/>
        <dbReference type="ChEBI" id="CHEBI:57443"/>
        <dbReference type="ChEBI" id="CHEBI:57920"/>
        <dbReference type="ChEBI" id="CHEBI:58704"/>
        <dbReference type="EC" id="2.5.1.126"/>
    </reaction>
</comment>
<comment type="catalytic activity">
    <reaction evidence="2">
        <text>S-adenosyl 3-(methylsulfanyl)propylamine + spermidine = thermospermine + S-methyl-5'-thioadenosine + H(+)</text>
        <dbReference type="Rhea" id="RHEA:30515"/>
        <dbReference type="ChEBI" id="CHEBI:15378"/>
        <dbReference type="ChEBI" id="CHEBI:17509"/>
        <dbReference type="ChEBI" id="CHEBI:57443"/>
        <dbReference type="ChEBI" id="CHEBI:57834"/>
        <dbReference type="ChEBI" id="CHEBI:59903"/>
        <dbReference type="EC" id="2.5.1.79"/>
    </reaction>
</comment>
<comment type="subunit">
    <text evidence="1">Homodimer or homotetramer.</text>
</comment>
<comment type="subcellular location">
    <subcellularLocation>
        <location evidence="1">Cytoplasm</location>
    </subcellularLocation>
</comment>
<comment type="similarity">
    <text evidence="1">Belongs to the spermidine/spermine synthase family.</text>
</comment>
<evidence type="ECO:0000255" key="1">
    <source>
        <dbReference type="HAMAP-Rule" id="MF_00198"/>
    </source>
</evidence>
<evidence type="ECO:0000269" key="2">
    <source>
    </source>
</evidence>
<evidence type="ECO:0000303" key="3">
    <source>
    </source>
</evidence>
<evidence type="ECO:0000305" key="4">
    <source>
    </source>
</evidence>
<organism>
    <name type="scientific">Pyrobaculum aerophilum (strain ATCC 51768 / DSM 7523 / JCM 9630 / CIP 104966 / NBRC 100827 / IM2)</name>
    <dbReference type="NCBI Taxonomy" id="178306"/>
    <lineage>
        <taxon>Archaea</taxon>
        <taxon>Thermoproteota</taxon>
        <taxon>Thermoprotei</taxon>
        <taxon>Thermoproteales</taxon>
        <taxon>Thermoproteaceae</taxon>
        <taxon>Pyrobaculum</taxon>
    </lineage>
</organism>
<name>SPEE_PYRAE</name>
<gene>
    <name evidence="1" type="primary">speE</name>
    <name type="ordered locus">PAE1203</name>
</gene>
<accession>Q8ZXM4</accession>
<reference key="1">
    <citation type="journal article" date="2002" name="Proc. Natl. Acad. Sci. U.S.A.">
        <title>Genome sequence of the hyperthermophilic crenarchaeon Pyrobaculum aerophilum.</title>
        <authorList>
            <person name="Fitz-Gibbon S.T."/>
            <person name="Ladner H."/>
            <person name="Kim U.-J."/>
            <person name="Stetter K.O."/>
            <person name="Simon M.I."/>
            <person name="Miller J.H."/>
        </authorList>
    </citation>
    <scope>NUCLEOTIDE SEQUENCE [LARGE SCALE GENOMIC DNA]</scope>
    <source>
        <strain>ATCC 51768 / DSM 7523 / JCM 9630 / CIP 104966 / NBRC 100827 / IM2</strain>
    </source>
</reference>
<reference key="2">
    <citation type="journal article" date="2009" name="FEBS Lett.">
        <title>Biosynthesis of long-chain polyamines by crenarchaeal polyamine synthases from Hyperthermus butylicus and Pyrobaculum aerophilum.</title>
        <authorList>
            <person name="Knott J.M."/>
        </authorList>
    </citation>
    <scope>FUNCTION</scope>
    <scope>CATALYTIC ACTIVITY</scope>
    <scope>SUBSTRATE SPECIFICITY</scope>
</reference>